<feature type="chain" id="PRO_0000165333" description="Putative tail sheath protein">
    <location>
        <begin position="1"/>
        <end position="376"/>
    </location>
</feature>
<keyword id="KW-1185">Reference proteome</keyword>
<protein>
    <recommendedName>
        <fullName>Putative tail sheath protein</fullName>
    </recommendedName>
    <alternativeName>
        <fullName>ORF23</fullName>
    </alternativeName>
</protein>
<dbReference type="EMBL" id="U24159">
    <property type="protein sequence ID" value="AAB09208.1"/>
    <property type="molecule type" value="Genomic_DNA"/>
</dbReference>
<dbReference type="PIR" id="S69529">
    <property type="entry name" value="S69529"/>
</dbReference>
<dbReference type="RefSeq" id="NP_043492.1">
    <property type="nucleotide sequence ID" value="NC_001697.1"/>
</dbReference>
<dbReference type="GeneID" id="1261129"/>
<dbReference type="KEGG" id="vg:1261129"/>
<dbReference type="Proteomes" id="UP000001713">
    <property type="component" value="Segment"/>
</dbReference>
<dbReference type="InterPro" id="IPR019694">
    <property type="entry name" value="Phage_HP1_Orf23"/>
</dbReference>
<dbReference type="Pfam" id="PF10758">
    <property type="entry name" value="DUF2586"/>
    <property type="match status" value="1"/>
</dbReference>
<proteinExistence type="predicted"/>
<accession>P51725</accession>
<sequence>MFPSVQINALNQLSGETKEIERHALFVGVGTTNQGKLLALTPDSDFDKVFGETDTDLKKQVRAAMLNAGQNWFAHVYIAQEDGYDFVECVKKANQTASFEYCVNTRYLGVDKASIGKLQECYAELLAKFGRRTFFIQAVQGINHDQSDGETWDQYVQKLTTLQQTIVADHVCLVPLLFGNETGVLAGRLANRAVTVADSPARVQTGALVSLGSANKPLDKDGNELTLAHLKSLETARYSVPMWYPDYDGYYRADGRTLDVEGGDYQVIENLRVVDKVARKVRLLAIGKIADRSFNSTTSSTEYHKNYFAKPLRDMSKSATINGKDFPGECMPPKDDAITIVWQSKTKVTIYIKVRPYDCPKEITANIFLDLDSLGE</sequence>
<organismHost>
    <name type="scientific">Haemophilus influenzae</name>
    <dbReference type="NCBI Taxonomy" id="727"/>
</organismHost>
<reference key="1">
    <citation type="journal article" date="1984" name="Gene">
        <title>Nucleotide sequence of cloned DNA segments of the Haemophilus influenzae bacteriophage HP1c1.</title>
        <authorList>
            <person name="Benjamin R.C."/>
            <person name="Fitzmaurice W.P."/>
            <person name="Huang P.C."/>
            <person name="Scocca J.J."/>
        </authorList>
    </citation>
    <scope>NUCLEOTIDE SEQUENCE [GENOMIC DNA]</scope>
</reference>
<reference key="2">
    <citation type="journal article" date="1996" name="Nucleic Acids Res.">
        <title>The complete nucleotide sequence of bacteriophage HP1 DNA.</title>
        <authorList>
            <person name="Esposito D."/>
            <person name="Fitzmaurice W.P."/>
            <person name="Benjamin R.C."/>
            <person name="Goodman S.D."/>
            <person name="Waldman A.S."/>
            <person name="Scocca J.J."/>
        </authorList>
    </citation>
    <scope>NUCLEOTIDE SEQUENCE [LARGE SCALE GENOMIC DNA]</scope>
</reference>
<organism>
    <name type="scientific">Haemophilus phage HP1 (strain HP1c1)</name>
    <name type="common">Bacteriophage HP1</name>
    <dbReference type="NCBI Taxonomy" id="1289570"/>
    <lineage>
        <taxon>Viruses</taxon>
        <taxon>Duplodnaviria</taxon>
        <taxon>Heunggongvirae</taxon>
        <taxon>Uroviricota</taxon>
        <taxon>Caudoviricetes</taxon>
        <taxon>Peduoviridae</taxon>
        <taxon>Hpunavirus</taxon>
        <taxon>Haemophilus phage HP1</taxon>
    </lineage>
</organism>
<name>YO23_BPHC1</name>